<organism>
    <name type="scientific">Agrotis ipsilon</name>
    <name type="common">Black cutworm moth</name>
    <dbReference type="NCBI Taxonomy" id="56364"/>
    <lineage>
        <taxon>Eukaryota</taxon>
        <taxon>Metazoa</taxon>
        <taxon>Ecdysozoa</taxon>
        <taxon>Arthropoda</taxon>
        <taxon>Hexapoda</taxon>
        <taxon>Insecta</taxon>
        <taxon>Pterygota</taxon>
        <taxon>Neoptera</taxon>
        <taxon>Endopterygota</taxon>
        <taxon>Lepidoptera</taxon>
        <taxon>Glossata</taxon>
        <taxon>Ditrysia</taxon>
        <taxon>Noctuoidea</taxon>
        <taxon>Noctuidae</taxon>
        <taxon>Noctuinae</taxon>
        <taxon>Noctuini</taxon>
        <taxon>Agrotis</taxon>
    </lineage>
</organism>
<proteinExistence type="evidence at protein level"/>
<evidence type="ECO:0000250" key="1">
    <source>
        <dbReference type="UniProtKB" id="Q9NL83"/>
    </source>
</evidence>
<evidence type="ECO:0000255" key="2"/>
<evidence type="ECO:0000269" key="3">
    <source>
    </source>
</evidence>
<evidence type="ECO:0000303" key="4">
    <source>
    </source>
</evidence>
<evidence type="ECO:0000305" key="5"/>
<evidence type="ECO:0000305" key="6">
    <source>
    </source>
</evidence>
<sequence length="189" mass="21361">MRGAGGALAVAVAALLVCCSADPHQEGDVSGSDHNTAERYDAAGQKTRTLDTLGGNLVREVREIRHSGYVPYLISRRFDFASPYGGKREPWPLAPIEFSGYYGDGLPKRNFDEIDRSGLDTFVKKRNFDEIDRSSMPFPYATKRFYHLSSFDKKRYRADYPMDEIDLSHFPIGSKRSQDSYPLLPRNLL</sequence>
<dbReference type="GO" id="GO:0005576">
    <property type="term" value="C:extracellular region"/>
    <property type="evidence" value="ECO:0007669"/>
    <property type="project" value="UniProtKB-SubCell"/>
</dbReference>
<dbReference type="GO" id="GO:0007218">
    <property type="term" value="P:neuropeptide signaling pathway"/>
    <property type="evidence" value="ECO:0007669"/>
    <property type="project" value="UniProtKB-KW"/>
</dbReference>
<feature type="signal peptide" evidence="2">
    <location>
        <begin position="1"/>
        <end position="21"/>
    </location>
</feature>
<feature type="propeptide" id="PRO_0000444261" evidence="5">
    <location>
        <begin position="22"/>
        <end position="124"/>
    </location>
</feature>
<feature type="peptide" id="PRO_0000444262" description="Orcokinin-like peptide" evidence="3">
    <location>
        <begin position="127"/>
        <end position="142"/>
    </location>
</feature>
<feature type="propeptide" id="PRO_0000444263" evidence="5">
    <location>
        <begin position="145"/>
        <end position="174"/>
    </location>
</feature>
<feature type="peptide" id="PRO_0000444264" description="Orcokinin-like peptide precursor-related peptide" evidence="3">
    <location>
        <begin position="177"/>
        <end position="189"/>
    </location>
</feature>
<name>ORCK_AGRIP</name>
<protein>
    <recommendedName>
        <fullName evidence="4">Orcokinin peptides</fullName>
    </recommendedName>
    <component>
        <recommendedName>
            <fullName evidence="4">Orcokinin-like peptide</fullName>
        </recommendedName>
    </component>
    <component>
        <recommendedName>
            <fullName evidence="6">Orcokinin-like peptide precursor-related peptide</fullName>
            <shortName evidence="4">Orcokinin-like peptide-PP</shortName>
        </recommendedName>
    </component>
</protein>
<keyword id="KW-0165">Cleavage on pair of basic residues</keyword>
<keyword id="KW-0903">Direct protein sequencing</keyword>
<keyword id="KW-0527">Neuropeptide</keyword>
<keyword id="KW-0964">Secreted</keyword>
<keyword id="KW-0732">Signal</keyword>
<reference evidence="5" key="1">
    <citation type="journal article" date="2018" name="J. Proteome Res.">
        <title>Mating-induced differential peptidomics of neuropeptides and protein hormones in Agrotis ipsilon moths.</title>
        <authorList>
            <person name="Diesner M."/>
            <person name="Gallot A."/>
            <person name="Binz H."/>
            <person name="Gaertner C."/>
            <person name="Vitecek S."/>
            <person name="Kahnt J."/>
            <person name="Schachtner J."/>
            <person name="Jacquin-Joly E."/>
            <person name="Gadenne C."/>
        </authorList>
    </citation>
    <scope>NUCLEOTIDE SEQUENCE [MRNA]</scope>
    <scope>PROTEIN SEQUENCE OF 127-142 AND 177-189</scope>
    <scope>TISSUE SPECIFICITY</scope>
    <scope>MASS SPECTROMETRY</scope>
    <scope>IDENTIFICATION BY MASS SPECTROMETRY</scope>
</reference>
<comment type="function">
    <text evidence="1">Myotropic peptides.</text>
</comment>
<comment type="subcellular location">
    <subcellularLocation>
        <location evidence="5">Secreted</location>
    </subcellularLocation>
</comment>
<comment type="tissue specificity">
    <text evidence="3">Orcokinin-like peptide: Expressed in corpora cardiaca (CC), corpora allata (CA), antennal lobe (AL) and gnathal ganglion (GNG) (at protein level). Expression in CC, CA and GNG detected in some animals, in AL in few animals (at protein level). Orcokinin-like peptide precursor-related peptide: Expressed in corpora cardiaca (CC), corpora allata (CA), antennal lobe (AL) and gnathal ganglion (GNG) (at protein level). Expression in GNG detected in most animals, expression in CC, CA and AL detected in some animals (at protein level).</text>
</comment>
<comment type="mass spectrometry" mass="1889.85" method="MALDI" evidence="3">
    <molecule>Orcokinin-like peptide</molecule>
    <text>Orcokinin-like peptide.</text>
</comment>
<comment type="mass spectrometry" mass="1515.82" method="MALDI" evidence="3">
    <molecule>Orcokinin-like peptide precursor-related peptide</molecule>
    <text>Orcokinin-like peptide precursor-related peptide.</text>
</comment>
<comment type="similarity">
    <text evidence="5">Belongs to the orcokinin family.</text>
</comment>
<accession>C0HKU9</accession>
<accession>C0HKV0</accession>